<keyword id="KW-0687">Ribonucleoprotein</keyword>
<keyword id="KW-0689">Ribosomal protein</keyword>
<keyword id="KW-0694">RNA-binding</keyword>
<keyword id="KW-0699">rRNA-binding</keyword>
<keyword id="KW-0820">tRNA-binding</keyword>
<sequence length="156" mass="17662">MPRRRVAAKREILDDPKYGSQILAKFMNHVMESGKKAVAERIVYGALEKVKERKNSDPLEIFEKALDAIAPLVEVKSRRVGGATYQVPVEVRPSRRNALAMRWLVDFARKRGEKSMALRLAGELLDAAEGKGAAVKKREDVHRMAEANKAFSHYRF</sequence>
<organism>
    <name type="scientific">Pseudomonas fluorescens (strain ATCC BAA-477 / NRRL B-23932 / Pf-5)</name>
    <dbReference type="NCBI Taxonomy" id="220664"/>
    <lineage>
        <taxon>Bacteria</taxon>
        <taxon>Pseudomonadati</taxon>
        <taxon>Pseudomonadota</taxon>
        <taxon>Gammaproteobacteria</taxon>
        <taxon>Pseudomonadales</taxon>
        <taxon>Pseudomonadaceae</taxon>
        <taxon>Pseudomonas</taxon>
    </lineage>
</organism>
<reference key="1">
    <citation type="journal article" date="2005" name="Nat. Biotechnol.">
        <title>Complete genome sequence of the plant commensal Pseudomonas fluorescens Pf-5.</title>
        <authorList>
            <person name="Paulsen I.T."/>
            <person name="Press C.M."/>
            <person name="Ravel J."/>
            <person name="Kobayashi D.Y."/>
            <person name="Myers G.S.A."/>
            <person name="Mavrodi D.V."/>
            <person name="DeBoy R.T."/>
            <person name="Seshadri R."/>
            <person name="Ren Q."/>
            <person name="Madupu R."/>
            <person name="Dodson R.J."/>
            <person name="Durkin A.S."/>
            <person name="Brinkac L.M."/>
            <person name="Daugherty S.C."/>
            <person name="Sullivan S.A."/>
            <person name="Rosovitz M.J."/>
            <person name="Gwinn M.L."/>
            <person name="Zhou L."/>
            <person name="Schneider D.J."/>
            <person name="Cartinhour S.W."/>
            <person name="Nelson W.C."/>
            <person name="Weidman J."/>
            <person name="Watkins K."/>
            <person name="Tran K."/>
            <person name="Khouri H."/>
            <person name="Pierson E.A."/>
            <person name="Pierson L.S. III"/>
            <person name="Thomashow L.S."/>
            <person name="Loper J.E."/>
        </authorList>
    </citation>
    <scope>NUCLEOTIDE SEQUENCE [LARGE SCALE GENOMIC DNA]</scope>
    <source>
        <strain>ATCC BAA-477 / NRRL B-23932 / Pf-5</strain>
    </source>
</reference>
<evidence type="ECO:0000255" key="1">
    <source>
        <dbReference type="HAMAP-Rule" id="MF_00480"/>
    </source>
</evidence>
<evidence type="ECO:0000305" key="2"/>
<gene>
    <name evidence="1" type="primary">rpsG</name>
    <name type="ordered locus">PFL_5586</name>
</gene>
<dbReference type="EMBL" id="CP000076">
    <property type="protein sequence ID" value="AAY94791.1"/>
    <property type="molecule type" value="Genomic_DNA"/>
</dbReference>
<dbReference type="RefSeq" id="WP_007925959.1">
    <property type="nucleotide sequence ID" value="NC_004129.6"/>
</dbReference>
<dbReference type="SMR" id="Q4K529"/>
<dbReference type="STRING" id="220664.PFL_5586"/>
<dbReference type="GeneID" id="93406152"/>
<dbReference type="KEGG" id="pfl:PFL_5586"/>
<dbReference type="eggNOG" id="COG0049">
    <property type="taxonomic scope" value="Bacteria"/>
</dbReference>
<dbReference type="HOGENOM" id="CLU_072226_1_1_6"/>
<dbReference type="Proteomes" id="UP000008540">
    <property type="component" value="Chromosome"/>
</dbReference>
<dbReference type="GO" id="GO:0015935">
    <property type="term" value="C:small ribosomal subunit"/>
    <property type="evidence" value="ECO:0007669"/>
    <property type="project" value="InterPro"/>
</dbReference>
<dbReference type="GO" id="GO:0019843">
    <property type="term" value="F:rRNA binding"/>
    <property type="evidence" value="ECO:0007669"/>
    <property type="project" value="UniProtKB-UniRule"/>
</dbReference>
<dbReference type="GO" id="GO:0003735">
    <property type="term" value="F:structural constituent of ribosome"/>
    <property type="evidence" value="ECO:0007669"/>
    <property type="project" value="InterPro"/>
</dbReference>
<dbReference type="GO" id="GO:0000049">
    <property type="term" value="F:tRNA binding"/>
    <property type="evidence" value="ECO:0007669"/>
    <property type="project" value="UniProtKB-UniRule"/>
</dbReference>
<dbReference type="GO" id="GO:0006412">
    <property type="term" value="P:translation"/>
    <property type="evidence" value="ECO:0007669"/>
    <property type="project" value="UniProtKB-UniRule"/>
</dbReference>
<dbReference type="CDD" id="cd14869">
    <property type="entry name" value="uS7_Bacteria"/>
    <property type="match status" value="1"/>
</dbReference>
<dbReference type="FunFam" id="1.10.455.10:FF:000001">
    <property type="entry name" value="30S ribosomal protein S7"/>
    <property type="match status" value="1"/>
</dbReference>
<dbReference type="Gene3D" id="1.10.455.10">
    <property type="entry name" value="Ribosomal protein S7 domain"/>
    <property type="match status" value="1"/>
</dbReference>
<dbReference type="HAMAP" id="MF_00480_B">
    <property type="entry name" value="Ribosomal_uS7_B"/>
    <property type="match status" value="1"/>
</dbReference>
<dbReference type="InterPro" id="IPR000235">
    <property type="entry name" value="Ribosomal_uS7"/>
</dbReference>
<dbReference type="InterPro" id="IPR005717">
    <property type="entry name" value="Ribosomal_uS7_bac/org-type"/>
</dbReference>
<dbReference type="InterPro" id="IPR020606">
    <property type="entry name" value="Ribosomal_uS7_CS"/>
</dbReference>
<dbReference type="InterPro" id="IPR023798">
    <property type="entry name" value="Ribosomal_uS7_dom"/>
</dbReference>
<dbReference type="InterPro" id="IPR036823">
    <property type="entry name" value="Ribosomal_uS7_dom_sf"/>
</dbReference>
<dbReference type="NCBIfam" id="TIGR01029">
    <property type="entry name" value="rpsG_bact"/>
    <property type="match status" value="1"/>
</dbReference>
<dbReference type="PANTHER" id="PTHR11205">
    <property type="entry name" value="RIBOSOMAL PROTEIN S7"/>
    <property type="match status" value="1"/>
</dbReference>
<dbReference type="Pfam" id="PF00177">
    <property type="entry name" value="Ribosomal_S7"/>
    <property type="match status" value="1"/>
</dbReference>
<dbReference type="PIRSF" id="PIRSF002122">
    <property type="entry name" value="RPS7p_RPS7a_RPS5e_RPS7o"/>
    <property type="match status" value="1"/>
</dbReference>
<dbReference type="SUPFAM" id="SSF47973">
    <property type="entry name" value="Ribosomal protein S7"/>
    <property type="match status" value="1"/>
</dbReference>
<dbReference type="PROSITE" id="PS00052">
    <property type="entry name" value="RIBOSOMAL_S7"/>
    <property type="match status" value="1"/>
</dbReference>
<proteinExistence type="inferred from homology"/>
<name>RS7_PSEF5</name>
<protein>
    <recommendedName>
        <fullName evidence="1">Small ribosomal subunit protein uS7</fullName>
    </recommendedName>
    <alternativeName>
        <fullName evidence="2">30S ribosomal protein S7</fullName>
    </alternativeName>
</protein>
<feature type="chain" id="PRO_0000226517" description="Small ribosomal subunit protein uS7">
    <location>
        <begin position="1"/>
        <end position="156"/>
    </location>
</feature>
<accession>Q4K529</accession>
<comment type="function">
    <text evidence="1">One of the primary rRNA binding proteins, it binds directly to 16S rRNA where it nucleates assembly of the head domain of the 30S subunit. Is located at the subunit interface close to the decoding center, probably blocks exit of the E-site tRNA.</text>
</comment>
<comment type="subunit">
    <text evidence="1">Part of the 30S ribosomal subunit. Contacts proteins S9 and S11.</text>
</comment>
<comment type="similarity">
    <text evidence="1">Belongs to the universal ribosomal protein uS7 family.</text>
</comment>